<proteinExistence type="predicted"/>
<keyword id="KW-1185">Reference proteome</keyword>
<accession>P45924</accession>
<evidence type="ECO:0000305" key="1"/>
<feature type="chain" id="PRO_0000049759" description="Uncharacterized protein YqbH">
    <location>
        <begin position="1"/>
        <end position="120"/>
    </location>
</feature>
<gene>
    <name type="primary">yqbH</name>
    <name type="ordered locus">BSU26110</name>
</gene>
<sequence>MSYQSLLTHRCDIYHLQEKKENRKQKFGVPVEDVQPVFSYPDEPDIENQPCYFTEKSQSIIQQESNVSIYQSFLVHFPATADIRVNDRAVWDGTAYKLQKPRKIRNHHWEVTAVREVEYL</sequence>
<dbReference type="EMBL" id="D32216">
    <property type="status" value="NOT_ANNOTATED_CDS"/>
    <property type="molecule type" value="Genomic_DNA"/>
</dbReference>
<dbReference type="EMBL" id="D84432">
    <property type="protein sequence ID" value="BAA12403.1"/>
    <property type="molecule type" value="Genomic_DNA"/>
</dbReference>
<dbReference type="EMBL" id="AL009126">
    <property type="protein sequence ID" value="CAB14552.1"/>
    <property type="molecule type" value="Genomic_DNA"/>
</dbReference>
<dbReference type="PIR" id="C69947">
    <property type="entry name" value="C69947"/>
</dbReference>
<dbReference type="RefSeq" id="NP_390488.1">
    <property type="nucleotide sequence ID" value="NC_000964.3"/>
</dbReference>
<dbReference type="RefSeq" id="WP_003229925.1">
    <property type="nucleotide sequence ID" value="NZ_OZ025638.1"/>
</dbReference>
<dbReference type="SMR" id="P45924"/>
<dbReference type="FunCoup" id="P45924">
    <property type="interactions" value="161"/>
</dbReference>
<dbReference type="STRING" id="224308.BSU26110"/>
<dbReference type="PaxDb" id="224308-BSU26110"/>
<dbReference type="EnsemblBacteria" id="CAB14552">
    <property type="protein sequence ID" value="CAB14552"/>
    <property type="gene ID" value="BSU_26110"/>
</dbReference>
<dbReference type="GeneID" id="937727"/>
<dbReference type="KEGG" id="bsu:BSU26110"/>
<dbReference type="PATRIC" id="fig|224308.179.peg.2837"/>
<dbReference type="eggNOG" id="ENOG5033B8A">
    <property type="taxonomic scope" value="Bacteria"/>
</dbReference>
<dbReference type="InParanoid" id="P45924"/>
<dbReference type="OrthoDB" id="2055104at2"/>
<dbReference type="BioCyc" id="BSUB:BSU26110-MONOMER"/>
<dbReference type="Proteomes" id="UP000001570">
    <property type="component" value="Chromosome"/>
</dbReference>
<dbReference type="Gene3D" id="2.40.10.370">
    <property type="entry name" value="Protein of unknown function DUF3599"/>
    <property type="match status" value="1"/>
</dbReference>
<dbReference type="InterPro" id="IPR024556">
    <property type="entry name" value="DUF3599"/>
</dbReference>
<dbReference type="InterPro" id="IPR038667">
    <property type="entry name" value="XkdH-like_sf"/>
</dbReference>
<dbReference type="Pfam" id="PF12206">
    <property type="entry name" value="DUF3599"/>
    <property type="match status" value="1"/>
</dbReference>
<protein>
    <recommendedName>
        <fullName>Uncharacterized protein YqbH</fullName>
    </recommendedName>
</protein>
<organism>
    <name type="scientific">Bacillus subtilis (strain 168)</name>
    <dbReference type="NCBI Taxonomy" id="224308"/>
    <lineage>
        <taxon>Bacteria</taxon>
        <taxon>Bacillati</taxon>
        <taxon>Bacillota</taxon>
        <taxon>Bacilli</taxon>
        <taxon>Bacillales</taxon>
        <taxon>Bacillaceae</taxon>
        <taxon>Bacillus</taxon>
    </lineage>
</organism>
<name>YQBH_BACSU</name>
<comment type="similarity">
    <text evidence="1">To B.subtilis XkdH.</text>
</comment>
<reference key="1">
    <citation type="journal article" date="1995" name="Microbiology">
        <title>Complete nucleotide sequence of a skin element excised by DNA rearrangement during sporulation in Bacillus subtilis.</title>
        <authorList>
            <person name="Takemaru K."/>
            <person name="Mizuno M."/>
            <person name="Sato T."/>
            <person name="Takeuchi M."/>
            <person name="Kobayashi Y."/>
        </authorList>
    </citation>
    <scope>NUCLEOTIDE SEQUENCE [GENOMIC DNA]</scope>
    <source>
        <strain>168 / JH642</strain>
    </source>
</reference>
<reference key="2">
    <citation type="journal article" date="1996" name="Microbiology">
        <title>Systematic sequencing of the 283 kb 210 degrees-232 degrees region of the Bacillus subtilis genome containing the skin element and many sporulation genes.</title>
        <authorList>
            <person name="Mizuno M."/>
            <person name="Masuda S."/>
            <person name="Takemaru K."/>
            <person name="Hosono S."/>
            <person name="Sato T."/>
            <person name="Takeuchi M."/>
            <person name="Kobayashi Y."/>
        </authorList>
    </citation>
    <scope>NUCLEOTIDE SEQUENCE [GENOMIC DNA]</scope>
    <source>
        <strain>168 / JH642</strain>
    </source>
</reference>
<reference key="3">
    <citation type="journal article" date="1997" name="Nature">
        <title>The complete genome sequence of the Gram-positive bacterium Bacillus subtilis.</title>
        <authorList>
            <person name="Kunst F."/>
            <person name="Ogasawara N."/>
            <person name="Moszer I."/>
            <person name="Albertini A.M."/>
            <person name="Alloni G."/>
            <person name="Azevedo V."/>
            <person name="Bertero M.G."/>
            <person name="Bessieres P."/>
            <person name="Bolotin A."/>
            <person name="Borchert S."/>
            <person name="Borriss R."/>
            <person name="Boursier L."/>
            <person name="Brans A."/>
            <person name="Braun M."/>
            <person name="Brignell S.C."/>
            <person name="Bron S."/>
            <person name="Brouillet S."/>
            <person name="Bruschi C.V."/>
            <person name="Caldwell B."/>
            <person name="Capuano V."/>
            <person name="Carter N.M."/>
            <person name="Choi S.-K."/>
            <person name="Codani J.-J."/>
            <person name="Connerton I.F."/>
            <person name="Cummings N.J."/>
            <person name="Daniel R.A."/>
            <person name="Denizot F."/>
            <person name="Devine K.M."/>
            <person name="Duesterhoeft A."/>
            <person name="Ehrlich S.D."/>
            <person name="Emmerson P.T."/>
            <person name="Entian K.-D."/>
            <person name="Errington J."/>
            <person name="Fabret C."/>
            <person name="Ferrari E."/>
            <person name="Foulger D."/>
            <person name="Fritz C."/>
            <person name="Fujita M."/>
            <person name="Fujita Y."/>
            <person name="Fuma S."/>
            <person name="Galizzi A."/>
            <person name="Galleron N."/>
            <person name="Ghim S.-Y."/>
            <person name="Glaser P."/>
            <person name="Goffeau A."/>
            <person name="Golightly E.J."/>
            <person name="Grandi G."/>
            <person name="Guiseppi G."/>
            <person name="Guy B.J."/>
            <person name="Haga K."/>
            <person name="Haiech J."/>
            <person name="Harwood C.R."/>
            <person name="Henaut A."/>
            <person name="Hilbert H."/>
            <person name="Holsappel S."/>
            <person name="Hosono S."/>
            <person name="Hullo M.-F."/>
            <person name="Itaya M."/>
            <person name="Jones L.-M."/>
            <person name="Joris B."/>
            <person name="Karamata D."/>
            <person name="Kasahara Y."/>
            <person name="Klaerr-Blanchard M."/>
            <person name="Klein C."/>
            <person name="Kobayashi Y."/>
            <person name="Koetter P."/>
            <person name="Koningstein G."/>
            <person name="Krogh S."/>
            <person name="Kumano M."/>
            <person name="Kurita K."/>
            <person name="Lapidus A."/>
            <person name="Lardinois S."/>
            <person name="Lauber J."/>
            <person name="Lazarevic V."/>
            <person name="Lee S.-M."/>
            <person name="Levine A."/>
            <person name="Liu H."/>
            <person name="Masuda S."/>
            <person name="Mauel C."/>
            <person name="Medigue C."/>
            <person name="Medina N."/>
            <person name="Mellado R.P."/>
            <person name="Mizuno M."/>
            <person name="Moestl D."/>
            <person name="Nakai S."/>
            <person name="Noback M."/>
            <person name="Noone D."/>
            <person name="O'Reilly M."/>
            <person name="Ogawa K."/>
            <person name="Ogiwara A."/>
            <person name="Oudega B."/>
            <person name="Park S.-H."/>
            <person name="Parro V."/>
            <person name="Pohl T.M."/>
            <person name="Portetelle D."/>
            <person name="Porwollik S."/>
            <person name="Prescott A.M."/>
            <person name="Presecan E."/>
            <person name="Pujic P."/>
            <person name="Purnelle B."/>
            <person name="Rapoport G."/>
            <person name="Rey M."/>
            <person name="Reynolds S."/>
            <person name="Rieger M."/>
            <person name="Rivolta C."/>
            <person name="Rocha E."/>
            <person name="Roche B."/>
            <person name="Rose M."/>
            <person name="Sadaie Y."/>
            <person name="Sato T."/>
            <person name="Scanlan E."/>
            <person name="Schleich S."/>
            <person name="Schroeter R."/>
            <person name="Scoffone F."/>
            <person name="Sekiguchi J."/>
            <person name="Sekowska A."/>
            <person name="Seror S.J."/>
            <person name="Serror P."/>
            <person name="Shin B.-S."/>
            <person name="Soldo B."/>
            <person name="Sorokin A."/>
            <person name="Tacconi E."/>
            <person name="Takagi T."/>
            <person name="Takahashi H."/>
            <person name="Takemaru K."/>
            <person name="Takeuchi M."/>
            <person name="Tamakoshi A."/>
            <person name="Tanaka T."/>
            <person name="Terpstra P."/>
            <person name="Tognoni A."/>
            <person name="Tosato V."/>
            <person name="Uchiyama S."/>
            <person name="Vandenbol M."/>
            <person name="Vannier F."/>
            <person name="Vassarotti A."/>
            <person name="Viari A."/>
            <person name="Wambutt R."/>
            <person name="Wedler E."/>
            <person name="Wedler H."/>
            <person name="Weitzenegger T."/>
            <person name="Winters P."/>
            <person name="Wipat A."/>
            <person name="Yamamoto H."/>
            <person name="Yamane K."/>
            <person name="Yasumoto K."/>
            <person name="Yata K."/>
            <person name="Yoshida K."/>
            <person name="Yoshikawa H.-F."/>
            <person name="Zumstein E."/>
            <person name="Yoshikawa H."/>
            <person name="Danchin A."/>
        </authorList>
    </citation>
    <scope>NUCLEOTIDE SEQUENCE [LARGE SCALE GENOMIC DNA]</scope>
    <source>
        <strain>168</strain>
    </source>
</reference>
<reference key="4">
    <citation type="journal article" date="1995" name="Gene">
        <title>Analysis of a Bacillus subtilis genome fragment using a co-operative computer system prototype.</title>
        <authorList>
            <person name="Medigue C."/>
            <person name="Moszer I."/>
            <person name="Viari A."/>
            <person name="Danchin A."/>
        </authorList>
    </citation>
    <scope>IDENTIFICATION</scope>
</reference>